<proteinExistence type="inferred from homology"/>
<dbReference type="EMBL" id="AM398681">
    <property type="protein sequence ID" value="CAL42579.1"/>
    <property type="molecule type" value="Genomic_DNA"/>
</dbReference>
<dbReference type="RefSeq" id="WP_011962637.1">
    <property type="nucleotide sequence ID" value="NC_009613.3"/>
</dbReference>
<dbReference type="RefSeq" id="YP_001295397.1">
    <property type="nucleotide sequence ID" value="NC_009613.3"/>
</dbReference>
<dbReference type="SMR" id="A6GWV6"/>
<dbReference type="STRING" id="402612.FP0468"/>
<dbReference type="EnsemblBacteria" id="CAL42579">
    <property type="protein sequence ID" value="CAL42579"/>
    <property type="gene ID" value="FP0468"/>
</dbReference>
<dbReference type="GeneID" id="66551606"/>
<dbReference type="KEGG" id="fps:FP0468"/>
<dbReference type="PATRIC" id="fig|402612.5.peg.483"/>
<dbReference type="eggNOG" id="COG0779">
    <property type="taxonomic scope" value="Bacteria"/>
</dbReference>
<dbReference type="HOGENOM" id="CLU_070525_3_1_10"/>
<dbReference type="OrthoDB" id="9789702at2"/>
<dbReference type="Proteomes" id="UP000006394">
    <property type="component" value="Chromosome"/>
</dbReference>
<dbReference type="GO" id="GO:0005737">
    <property type="term" value="C:cytoplasm"/>
    <property type="evidence" value="ECO:0007669"/>
    <property type="project" value="UniProtKB-SubCell"/>
</dbReference>
<dbReference type="GO" id="GO:0042274">
    <property type="term" value="P:ribosomal small subunit biogenesis"/>
    <property type="evidence" value="ECO:0007669"/>
    <property type="project" value="UniProtKB-UniRule"/>
</dbReference>
<dbReference type="Gene3D" id="3.30.300.70">
    <property type="entry name" value="RimP-like superfamily, N-terminal"/>
    <property type="match status" value="1"/>
</dbReference>
<dbReference type="HAMAP" id="MF_01077">
    <property type="entry name" value="RimP"/>
    <property type="match status" value="1"/>
</dbReference>
<dbReference type="InterPro" id="IPR003728">
    <property type="entry name" value="Ribosome_maturation_RimP"/>
</dbReference>
<dbReference type="InterPro" id="IPR028989">
    <property type="entry name" value="RimP_N"/>
</dbReference>
<dbReference type="InterPro" id="IPR035956">
    <property type="entry name" value="RimP_N_sf"/>
</dbReference>
<dbReference type="NCBIfam" id="NF002531">
    <property type="entry name" value="PRK02001.1"/>
    <property type="match status" value="1"/>
</dbReference>
<dbReference type="PANTHER" id="PTHR33867">
    <property type="entry name" value="RIBOSOME MATURATION FACTOR RIMP"/>
    <property type="match status" value="1"/>
</dbReference>
<dbReference type="PANTHER" id="PTHR33867:SF1">
    <property type="entry name" value="RIBOSOME MATURATION FACTOR RIMP"/>
    <property type="match status" value="1"/>
</dbReference>
<dbReference type="Pfam" id="PF02576">
    <property type="entry name" value="RimP_N"/>
    <property type="match status" value="1"/>
</dbReference>
<dbReference type="SUPFAM" id="SSF75420">
    <property type="entry name" value="YhbC-like, N-terminal domain"/>
    <property type="match status" value="1"/>
</dbReference>
<sequence>MAFKEKVKELLEQGLAEYPNLFLIDLNINDSNKIIITLDGDNGVQLQDCINISRSIDNNLDREEVDFALEVASAGVSLPLKLVRQYKKNIGRTLKIKTATQTIEALLLEVSDQDITVEWSSREPKKIGKGKETVVHNEKIAYAAIQEAIVIIIF</sequence>
<gene>
    <name evidence="1" type="primary">rimP</name>
    <name type="ordered locus">FP0468</name>
</gene>
<comment type="function">
    <text evidence="1">Required for maturation of 30S ribosomal subunits.</text>
</comment>
<comment type="subcellular location">
    <subcellularLocation>
        <location evidence="1">Cytoplasm</location>
    </subcellularLocation>
</comment>
<comment type="similarity">
    <text evidence="1">Belongs to the RimP family.</text>
</comment>
<accession>A6GWV6</accession>
<name>RIMP_FLAPJ</name>
<reference key="1">
    <citation type="journal article" date="2007" name="Nat. Biotechnol.">
        <title>Complete genome sequence of the fish pathogen Flavobacterium psychrophilum.</title>
        <authorList>
            <person name="Duchaud E."/>
            <person name="Boussaha M."/>
            <person name="Loux V."/>
            <person name="Bernardet J.-F."/>
            <person name="Michel C."/>
            <person name="Kerouault B."/>
            <person name="Mondot S."/>
            <person name="Nicolas P."/>
            <person name="Bossy R."/>
            <person name="Caron C."/>
            <person name="Bessieres P."/>
            <person name="Gibrat J.-F."/>
            <person name="Claverol S."/>
            <person name="Dumetz F."/>
            <person name="Le Henaff M."/>
            <person name="Benmansour A."/>
        </authorList>
    </citation>
    <scope>NUCLEOTIDE SEQUENCE [LARGE SCALE GENOMIC DNA]</scope>
    <source>
        <strain>ATCC 49511 / DSM 21280 / CIP 103535 / JIP02/86</strain>
    </source>
</reference>
<evidence type="ECO:0000255" key="1">
    <source>
        <dbReference type="HAMAP-Rule" id="MF_01077"/>
    </source>
</evidence>
<organism>
    <name type="scientific">Flavobacterium psychrophilum (strain ATCC 49511 / DSM 21280 / CIP 103535 / JIP02/86)</name>
    <dbReference type="NCBI Taxonomy" id="402612"/>
    <lineage>
        <taxon>Bacteria</taxon>
        <taxon>Pseudomonadati</taxon>
        <taxon>Bacteroidota</taxon>
        <taxon>Flavobacteriia</taxon>
        <taxon>Flavobacteriales</taxon>
        <taxon>Flavobacteriaceae</taxon>
        <taxon>Flavobacterium</taxon>
    </lineage>
</organism>
<protein>
    <recommendedName>
        <fullName evidence="1">Ribosome maturation factor RimP</fullName>
    </recommendedName>
</protein>
<feature type="chain" id="PRO_0000384670" description="Ribosome maturation factor RimP">
    <location>
        <begin position="1"/>
        <end position="154"/>
    </location>
</feature>
<keyword id="KW-0963">Cytoplasm</keyword>
<keyword id="KW-1185">Reference proteome</keyword>
<keyword id="KW-0690">Ribosome biogenesis</keyword>